<protein>
    <recommendedName>
        <fullName>Translation machinery-associated protein 16</fullName>
    </recommendedName>
</protein>
<gene>
    <name type="primary">tma16</name>
</gene>
<keyword id="KW-0539">Nucleus</keyword>
<keyword id="KW-1185">Reference proteome</keyword>
<keyword id="KW-0690">Ribosome biogenesis</keyword>
<organism>
    <name type="scientific">Xenopus laevis</name>
    <name type="common">African clawed frog</name>
    <dbReference type="NCBI Taxonomy" id="8355"/>
    <lineage>
        <taxon>Eukaryota</taxon>
        <taxon>Metazoa</taxon>
        <taxon>Chordata</taxon>
        <taxon>Craniata</taxon>
        <taxon>Vertebrata</taxon>
        <taxon>Euteleostomi</taxon>
        <taxon>Amphibia</taxon>
        <taxon>Batrachia</taxon>
        <taxon>Anura</taxon>
        <taxon>Pipoidea</taxon>
        <taxon>Pipidae</taxon>
        <taxon>Xenopodinae</taxon>
        <taxon>Xenopus</taxon>
        <taxon>Xenopus</taxon>
    </lineage>
</organism>
<dbReference type="EMBL" id="BC097807">
    <property type="protein sequence ID" value="AAH97807.1"/>
    <property type="molecule type" value="mRNA"/>
</dbReference>
<dbReference type="RefSeq" id="NP_001089532.1">
    <property type="nucleotide sequence ID" value="NM_001096063.1"/>
</dbReference>
<dbReference type="SMR" id="Q4V7N4"/>
<dbReference type="DNASU" id="734587"/>
<dbReference type="GeneID" id="734587"/>
<dbReference type="KEGG" id="xla:734587"/>
<dbReference type="AGR" id="Xenbase:XB-GENE-1015323"/>
<dbReference type="CTD" id="734587"/>
<dbReference type="Xenbase" id="XB-GENE-1015323">
    <property type="gene designation" value="tma16.L"/>
</dbReference>
<dbReference type="OrthoDB" id="270284at2759"/>
<dbReference type="Proteomes" id="UP000186698">
    <property type="component" value="Chromosome 1L"/>
</dbReference>
<dbReference type="Bgee" id="734587">
    <property type="expression patterns" value="Expressed in gastrula and 19 other cell types or tissues"/>
</dbReference>
<dbReference type="GO" id="GO:0005634">
    <property type="term" value="C:nucleus"/>
    <property type="evidence" value="ECO:0000318"/>
    <property type="project" value="GO_Central"/>
</dbReference>
<dbReference type="GO" id="GO:1990275">
    <property type="term" value="F:preribosome binding"/>
    <property type="evidence" value="ECO:0000250"/>
    <property type="project" value="UniProtKB"/>
</dbReference>
<dbReference type="GO" id="GO:0042273">
    <property type="term" value="P:ribosomal large subunit biogenesis"/>
    <property type="evidence" value="ECO:0000250"/>
    <property type="project" value="UniProtKB"/>
</dbReference>
<dbReference type="FunFam" id="1.20.1440.170:FF:000001">
    <property type="entry name" value="Translation machinery-associated 16 homolog"/>
    <property type="match status" value="1"/>
</dbReference>
<dbReference type="Gene3D" id="1.20.1440.170">
    <property type="entry name" value="Translation machinery-associated protein 16-like"/>
    <property type="match status" value="1"/>
</dbReference>
<dbReference type="InterPro" id="IPR021346">
    <property type="entry name" value="Tma16"/>
</dbReference>
<dbReference type="InterPro" id="IPR038356">
    <property type="entry name" value="Tma16_sf"/>
</dbReference>
<dbReference type="PANTHER" id="PTHR13349">
    <property type="entry name" value="TRANSLATION MACHINERY-ASSOCIATED PROTEIN 16"/>
    <property type="match status" value="1"/>
</dbReference>
<dbReference type="PANTHER" id="PTHR13349:SF2">
    <property type="entry name" value="TRANSLATION MACHINERY-ASSOCIATED PROTEIN 16"/>
    <property type="match status" value="1"/>
</dbReference>
<dbReference type="Pfam" id="PF11176">
    <property type="entry name" value="Tma16"/>
    <property type="match status" value="1"/>
</dbReference>
<proteinExistence type="evidence at transcript level"/>
<evidence type="ECO:0000250" key="1">
    <source>
        <dbReference type="UniProtKB" id="Q96EY4"/>
    </source>
</evidence>
<evidence type="ECO:0000256" key="2">
    <source>
        <dbReference type="SAM" id="MobiDB-lite"/>
    </source>
</evidence>
<evidence type="ECO:0000305" key="3"/>
<feature type="chain" id="PRO_0000321562" description="Translation machinery-associated protein 16">
    <location>
        <begin position="1"/>
        <end position="196"/>
    </location>
</feature>
<feature type="region of interest" description="Disordered" evidence="2">
    <location>
        <begin position="1"/>
        <end position="37"/>
    </location>
</feature>
<feature type="region of interest" description="Disordered" evidence="2">
    <location>
        <begin position="162"/>
        <end position="196"/>
    </location>
</feature>
<feature type="compositionally biased region" description="Basic and acidic residues" evidence="2">
    <location>
        <begin position="27"/>
        <end position="37"/>
    </location>
</feature>
<sequence>MPKVQSNKSKQEKVIHPYSRKAAQLTREAHKQDRKDRLKSEKALRLSIIGEKLQWFQSHLNPEKAEYTKKEACELIESYLHRFDNELEQIELHNSIKGRQTRRHESRETVIKQTIERERQLYNGYGIEIPDIVNSRNLKVFRDWDLDMKKLPNIKMRKISISDSLSKSDKDVPGSNDEIENELGSNEESMPDFQES</sequence>
<name>TMA16_XENLA</name>
<reference key="1">
    <citation type="submission" date="2005-06" db="EMBL/GenBank/DDBJ databases">
        <authorList>
            <consortium name="NIH - Xenopus Gene Collection (XGC) project"/>
        </authorList>
    </citation>
    <scope>NUCLEOTIDE SEQUENCE [LARGE SCALE MRNA]</scope>
    <source>
        <tissue>Egg</tissue>
    </source>
</reference>
<comment type="function">
    <text evidence="1">Involved in the biogenesis of the 60S ribosomal subunit in the nucleus.</text>
</comment>
<comment type="subunit">
    <text evidence="1">Associates with pre-60S ribosomal particles.</text>
</comment>
<comment type="subcellular location">
    <subcellularLocation>
        <location evidence="1">Nucleus</location>
    </subcellularLocation>
</comment>
<comment type="similarity">
    <text evidence="3">Belongs to the TMA16 family.</text>
</comment>
<accession>Q4V7N4</accession>